<dbReference type="EC" id="3.6.4.12"/>
<dbReference type="EMBL" id="CM000130">
    <property type="protein sequence ID" value="EEC79367.1"/>
    <property type="molecule type" value="Genomic_DNA"/>
</dbReference>
<dbReference type="SMR" id="B8AZ14"/>
<dbReference type="STRING" id="39946.B8AZ14"/>
<dbReference type="EnsemblPlants" id="BGIOSGA020002-TA">
    <property type="protein sequence ID" value="BGIOSGA020002-PA"/>
    <property type="gene ID" value="BGIOSGA020002"/>
</dbReference>
<dbReference type="Gramene" id="BGIOSGA020002-TA">
    <property type="protein sequence ID" value="BGIOSGA020002-PA"/>
    <property type="gene ID" value="BGIOSGA020002"/>
</dbReference>
<dbReference type="HOGENOM" id="CLU_000995_7_2_1"/>
<dbReference type="OMA" id="THTVDWQ"/>
<dbReference type="Proteomes" id="UP000007015">
    <property type="component" value="Chromosome 5"/>
</dbReference>
<dbReference type="GO" id="GO:0042555">
    <property type="term" value="C:MCM complex"/>
    <property type="evidence" value="ECO:0007669"/>
    <property type="project" value="TreeGrafter"/>
</dbReference>
<dbReference type="GO" id="GO:0005634">
    <property type="term" value="C:nucleus"/>
    <property type="evidence" value="ECO:0007669"/>
    <property type="project" value="UniProtKB-SubCell"/>
</dbReference>
<dbReference type="GO" id="GO:0005524">
    <property type="term" value="F:ATP binding"/>
    <property type="evidence" value="ECO:0007669"/>
    <property type="project" value="UniProtKB-KW"/>
</dbReference>
<dbReference type="GO" id="GO:0016887">
    <property type="term" value="F:ATP hydrolysis activity"/>
    <property type="evidence" value="ECO:0007669"/>
    <property type="project" value="InterPro"/>
</dbReference>
<dbReference type="GO" id="GO:0003697">
    <property type="term" value="F:single-stranded DNA binding"/>
    <property type="evidence" value="ECO:0007669"/>
    <property type="project" value="TreeGrafter"/>
</dbReference>
<dbReference type="GO" id="GO:0017116">
    <property type="term" value="F:single-stranded DNA helicase activity"/>
    <property type="evidence" value="ECO:0007669"/>
    <property type="project" value="TreeGrafter"/>
</dbReference>
<dbReference type="GO" id="GO:0008270">
    <property type="term" value="F:zinc ion binding"/>
    <property type="evidence" value="ECO:0007669"/>
    <property type="project" value="UniProtKB-KW"/>
</dbReference>
<dbReference type="GO" id="GO:0006260">
    <property type="term" value="P:DNA replication"/>
    <property type="evidence" value="ECO:0007669"/>
    <property type="project" value="InterPro"/>
</dbReference>
<dbReference type="GO" id="GO:0000724">
    <property type="term" value="P:double-strand break repair via homologous recombination"/>
    <property type="evidence" value="ECO:0007669"/>
    <property type="project" value="EnsemblPlants"/>
</dbReference>
<dbReference type="GO" id="GO:0007143">
    <property type="term" value="P:female meiotic nuclear division"/>
    <property type="evidence" value="ECO:0007669"/>
    <property type="project" value="EnsemblPlants"/>
</dbReference>
<dbReference type="GO" id="GO:0007140">
    <property type="term" value="P:male meiotic nuclear division"/>
    <property type="evidence" value="ECO:0007669"/>
    <property type="project" value="EnsemblPlants"/>
</dbReference>
<dbReference type="GO" id="GO:0009555">
    <property type="term" value="P:pollen development"/>
    <property type="evidence" value="ECO:0007669"/>
    <property type="project" value="EnsemblPlants"/>
</dbReference>
<dbReference type="CDD" id="cd17759">
    <property type="entry name" value="MCM8"/>
    <property type="match status" value="1"/>
</dbReference>
<dbReference type="CDD" id="cd22247">
    <property type="entry name" value="MCM8_WHD"/>
    <property type="match status" value="1"/>
</dbReference>
<dbReference type="FunFam" id="2.20.28.10:FF:000007">
    <property type="entry name" value="DNA helicase MCM8 isoform X1"/>
    <property type="match status" value="1"/>
</dbReference>
<dbReference type="Gene3D" id="2.20.28.10">
    <property type="match status" value="1"/>
</dbReference>
<dbReference type="Gene3D" id="2.40.50.140">
    <property type="entry name" value="Nucleic acid-binding proteins"/>
    <property type="match status" value="1"/>
</dbReference>
<dbReference type="Gene3D" id="3.40.50.300">
    <property type="entry name" value="P-loop containing nucleotide triphosphate hydrolases"/>
    <property type="match status" value="1"/>
</dbReference>
<dbReference type="InterPro" id="IPR003593">
    <property type="entry name" value="AAA+_ATPase"/>
</dbReference>
<dbReference type="InterPro" id="IPR031327">
    <property type="entry name" value="MCM"/>
</dbReference>
<dbReference type="InterPro" id="IPR056875">
    <property type="entry name" value="MCM8/REC_WHD"/>
</dbReference>
<dbReference type="InterPro" id="IPR018525">
    <property type="entry name" value="MCM_CS"/>
</dbReference>
<dbReference type="InterPro" id="IPR001208">
    <property type="entry name" value="MCM_dom"/>
</dbReference>
<dbReference type="InterPro" id="IPR041562">
    <property type="entry name" value="MCM_lid"/>
</dbReference>
<dbReference type="InterPro" id="IPR033762">
    <property type="entry name" value="MCM_OB"/>
</dbReference>
<dbReference type="InterPro" id="IPR012340">
    <property type="entry name" value="NA-bd_OB-fold"/>
</dbReference>
<dbReference type="InterPro" id="IPR027417">
    <property type="entry name" value="P-loop_NTPase"/>
</dbReference>
<dbReference type="PANTHER" id="PTHR11630:SF47">
    <property type="entry name" value="DNA HELICASE MCM8"/>
    <property type="match status" value="1"/>
</dbReference>
<dbReference type="PANTHER" id="PTHR11630">
    <property type="entry name" value="DNA REPLICATION LICENSING FACTOR MCM FAMILY MEMBER"/>
    <property type="match status" value="1"/>
</dbReference>
<dbReference type="Pfam" id="PF00493">
    <property type="entry name" value="MCM"/>
    <property type="match status" value="1"/>
</dbReference>
<dbReference type="Pfam" id="PF17855">
    <property type="entry name" value="MCM_lid"/>
    <property type="match status" value="1"/>
</dbReference>
<dbReference type="Pfam" id="PF17207">
    <property type="entry name" value="MCM_OB"/>
    <property type="match status" value="1"/>
</dbReference>
<dbReference type="Pfam" id="PF25051">
    <property type="entry name" value="WHD_MCM8"/>
    <property type="match status" value="1"/>
</dbReference>
<dbReference type="PRINTS" id="PR01657">
    <property type="entry name" value="MCMFAMILY"/>
</dbReference>
<dbReference type="SMART" id="SM00382">
    <property type="entry name" value="AAA"/>
    <property type="match status" value="1"/>
</dbReference>
<dbReference type="SMART" id="SM00350">
    <property type="entry name" value="MCM"/>
    <property type="match status" value="1"/>
</dbReference>
<dbReference type="SUPFAM" id="SSF50249">
    <property type="entry name" value="Nucleic acid-binding proteins"/>
    <property type="match status" value="1"/>
</dbReference>
<dbReference type="SUPFAM" id="SSF52540">
    <property type="entry name" value="P-loop containing nucleoside triphosphate hydrolases"/>
    <property type="match status" value="1"/>
</dbReference>
<dbReference type="PROSITE" id="PS00847">
    <property type="entry name" value="MCM_1"/>
    <property type="match status" value="1"/>
</dbReference>
<dbReference type="PROSITE" id="PS50051">
    <property type="entry name" value="MCM_2"/>
    <property type="match status" value="1"/>
</dbReference>
<evidence type="ECO:0000250" key="1"/>
<evidence type="ECO:0000255" key="2"/>
<evidence type="ECO:0000305" key="3"/>
<organism>
    <name type="scientific">Oryza sativa subsp. indica</name>
    <name type="common">Rice</name>
    <dbReference type="NCBI Taxonomy" id="39946"/>
    <lineage>
        <taxon>Eukaryota</taxon>
        <taxon>Viridiplantae</taxon>
        <taxon>Streptophyta</taxon>
        <taxon>Embryophyta</taxon>
        <taxon>Tracheophyta</taxon>
        <taxon>Spermatophyta</taxon>
        <taxon>Magnoliopsida</taxon>
        <taxon>Liliopsida</taxon>
        <taxon>Poales</taxon>
        <taxon>Poaceae</taxon>
        <taxon>BOP clade</taxon>
        <taxon>Oryzoideae</taxon>
        <taxon>Oryzeae</taxon>
        <taxon>Oryzinae</taxon>
        <taxon>Oryza</taxon>
        <taxon>Oryza sativa</taxon>
    </lineage>
</organism>
<keyword id="KW-0067">ATP-binding</keyword>
<keyword id="KW-0227">DNA damage</keyword>
<keyword id="KW-0234">DNA repair</keyword>
<keyword id="KW-0238">DNA-binding</keyword>
<keyword id="KW-0347">Helicase</keyword>
<keyword id="KW-0378">Hydrolase</keyword>
<keyword id="KW-0469">Meiosis</keyword>
<keyword id="KW-0479">Metal-binding</keyword>
<keyword id="KW-0547">Nucleotide-binding</keyword>
<keyword id="KW-0539">Nucleus</keyword>
<keyword id="KW-1185">Reference proteome</keyword>
<keyword id="KW-0862">Zinc</keyword>
<keyword id="KW-0863">Zinc-finger</keyword>
<gene>
    <name type="primary">MCM8</name>
    <name type="ORF">OsI_20256</name>
</gene>
<proteinExistence type="inferred from homology"/>
<accession>B8AZ14</accession>
<feature type="chain" id="PRO_0000426003" description="Probable DNA helicase MCM8">
    <location>
        <begin position="1"/>
        <end position="789"/>
    </location>
</feature>
<feature type="domain" description="MCM">
    <location>
        <begin position="339"/>
        <end position="546"/>
    </location>
</feature>
<feature type="zinc finger region" description="C4-type" evidence="2">
    <location>
        <begin position="174"/>
        <end position="201"/>
    </location>
</feature>
<feature type="short sequence motif" description="Arginine finger">
    <location>
        <begin position="522"/>
        <end position="525"/>
    </location>
</feature>
<feature type="binding site" evidence="1">
    <location>
        <begin position="391"/>
        <end position="398"/>
    </location>
    <ligand>
        <name>ATP</name>
        <dbReference type="ChEBI" id="CHEBI:30616"/>
    </ligand>
</feature>
<sequence>MYDDGPRKGKPGGLSMDAATAAGLAAVWPEYFPEESEFAADGRSARLAADLVDLFSSPDASDLLSRVEDDGDILSLPVDFQQLSNLTWITEALQENPKEALLSMGAAVHLIVCASRDLQLGDINKINIRLYNHTKTIALKNLKAAYIKKLVTVRGTVLKVSTVKPLVLQLNFQCMKCATKFPRVFCDGKFSPPVSCSIQGCKSRTFIPMRSTAKLMDFQKIRIQELASGESHEEGRVPRTIECELTEDLVDCCIPGETVTVTGIVKVLNNYMDVGGGKSKSRNQGLYYLYLEAISVRNSKVHAASGNSDAASGSFGFQAFTEKDLEFISKFKEEHGADVFRQILHSFCPSIYGHELVKAGITLALFGGVQKHSIDQNKVPVRGDIHAVVVGDPGLGKSQLLQAAAAVSPRGIYVCGNTTTNAGLTVAVVKDSMSNDYAFEAGAMVLADRGICCIDEFDKMSAEHQALLEAMEQQCVSVAKAGLVASLSARTSVLAAANPVGGHYDRAKTVNENLKMSAALLSRFDLVFILLDKPDELLDKRVSDHIIALHSNDGGPFTANKRIRTVPQFNPSTEFGVGRTSLASRLRLHPEKDKDFCPLPGPLLRKYISYARSHVNPRIFMPSPAADSLQKFYLDLRKQSDSADGTPITARQLESLVRLAEARARVDLREEVTLEDAKEVIDIMTESLYDKCVDEHGVVDFARSGGMSNQKQSKKFLRALNEQCDLQKKDCFTMNEMYNLADRISLQVANLDAIVESLNNAGYITKKGSSMYQVVTSSYQGSQATWSGR</sequence>
<name>MCM8_ORYSI</name>
<comment type="function">
    <text evidence="1">Probable DNA helicase that may play a role in DNA repair durin meiosis.</text>
</comment>
<comment type="catalytic activity">
    <reaction>
        <text>ATP + H2O = ADP + phosphate + H(+)</text>
        <dbReference type="Rhea" id="RHEA:13065"/>
        <dbReference type="ChEBI" id="CHEBI:15377"/>
        <dbReference type="ChEBI" id="CHEBI:15378"/>
        <dbReference type="ChEBI" id="CHEBI:30616"/>
        <dbReference type="ChEBI" id="CHEBI:43474"/>
        <dbReference type="ChEBI" id="CHEBI:456216"/>
        <dbReference type="EC" id="3.6.4.12"/>
    </reaction>
</comment>
<comment type="subcellular location">
    <subcellularLocation>
        <location evidence="3">Nucleus</location>
    </subcellularLocation>
</comment>
<comment type="similarity">
    <text evidence="3">Belongs to the MCM family.</text>
</comment>
<reference key="1">
    <citation type="journal article" date="2005" name="PLoS Biol.">
        <title>The genomes of Oryza sativa: a history of duplications.</title>
        <authorList>
            <person name="Yu J."/>
            <person name="Wang J."/>
            <person name="Lin W."/>
            <person name="Li S."/>
            <person name="Li H."/>
            <person name="Zhou J."/>
            <person name="Ni P."/>
            <person name="Dong W."/>
            <person name="Hu S."/>
            <person name="Zeng C."/>
            <person name="Zhang J."/>
            <person name="Zhang Y."/>
            <person name="Li R."/>
            <person name="Xu Z."/>
            <person name="Li S."/>
            <person name="Li X."/>
            <person name="Zheng H."/>
            <person name="Cong L."/>
            <person name="Lin L."/>
            <person name="Yin J."/>
            <person name="Geng J."/>
            <person name="Li G."/>
            <person name="Shi J."/>
            <person name="Liu J."/>
            <person name="Lv H."/>
            <person name="Li J."/>
            <person name="Wang J."/>
            <person name="Deng Y."/>
            <person name="Ran L."/>
            <person name="Shi X."/>
            <person name="Wang X."/>
            <person name="Wu Q."/>
            <person name="Li C."/>
            <person name="Ren X."/>
            <person name="Wang J."/>
            <person name="Wang X."/>
            <person name="Li D."/>
            <person name="Liu D."/>
            <person name="Zhang X."/>
            <person name="Ji Z."/>
            <person name="Zhao W."/>
            <person name="Sun Y."/>
            <person name="Zhang Z."/>
            <person name="Bao J."/>
            <person name="Han Y."/>
            <person name="Dong L."/>
            <person name="Ji J."/>
            <person name="Chen P."/>
            <person name="Wu S."/>
            <person name="Liu J."/>
            <person name="Xiao Y."/>
            <person name="Bu D."/>
            <person name="Tan J."/>
            <person name="Yang L."/>
            <person name="Ye C."/>
            <person name="Zhang J."/>
            <person name="Xu J."/>
            <person name="Zhou Y."/>
            <person name="Yu Y."/>
            <person name="Zhang B."/>
            <person name="Zhuang S."/>
            <person name="Wei H."/>
            <person name="Liu B."/>
            <person name="Lei M."/>
            <person name="Yu H."/>
            <person name="Li Y."/>
            <person name="Xu H."/>
            <person name="Wei S."/>
            <person name="He X."/>
            <person name="Fang L."/>
            <person name="Zhang Z."/>
            <person name="Zhang Y."/>
            <person name="Huang X."/>
            <person name="Su Z."/>
            <person name="Tong W."/>
            <person name="Li J."/>
            <person name="Tong Z."/>
            <person name="Li S."/>
            <person name="Ye J."/>
            <person name="Wang L."/>
            <person name="Fang L."/>
            <person name="Lei T."/>
            <person name="Chen C.-S."/>
            <person name="Chen H.-C."/>
            <person name="Xu Z."/>
            <person name="Li H."/>
            <person name="Huang H."/>
            <person name="Zhang F."/>
            <person name="Xu H."/>
            <person name="Li N."/>
            <person name="Zhao C."/>
            <person name="Li S."/>
            <person name="Dong L."/>
            <person name="Huang Y."/>
            <person name="Li L."/>
            <person name="Xi Y."/>
            <person name="Qi Q."/>
            <person name="Li W."/>
            <person name="Zhang B."/>
            <person name="Hu W."/>
            <person name="Zhang Y."/>
            <person name="Tian X."/>
            <person name="Jiao Y."/>
            <person name="Liang X."/>
            <person name="Jin J."/>
            <person name="Gao L."/>
            <person name="Zheng W."/>
            <person name="Hao B."/>
            <person name="Liu S.-M."/>
            <person name="Wang W."/>
            <person name="Yuan L."/>
            <person name="Cao M."/>
            <person name="McDermott J."/>
            <person name="Samudrala R."/>
            <person name="Wang J."/>
            <person name="Wong G.K.-S."/>
            <person name="Yang H."/>
        </authorList>
    </citation>
    <scope>NUCLEOTIDE SEQUENCE [LARGE SCALE GENOMIC DNA]</scope>
    <source>
        <strain>cv. 93-11</strain>
    </source>
</reference>
<protein>
    <recommendedName>
        <fullName>Probable DNA helicase MCM8</fullName>
        <ecNumber>3.6.4.12</ecNumber>
    </recommendedName>
    <alternativeName>
        <fullName>Minichromosome maintenance 8</fullName>
    </alternativeName>
</protein>